<reference key="1">
    <citation type="journal article" date="2001" name="Nature">
        <title>Complete genome sequence of a multiple drug resistant Salmonella enterica serovar Typhi CT18.</title>
        <authorList>
            <person name="Parkhill J."/>
            <person name="Dougan G."/>
            <person name="James K.D."/>
            <person name="Thomson N.R."/>
            <person name="Pickard D."/>
            <person name="Wain J."/>
            <person name="Churcher C.M."/>
            <person name="Mungall K.L."/>
            <person name="Bentley S.D."/>
            <person name="Holden M.T.G."/>
            <person name="Sebaihia M."/>
            <person name="Baker S."/>
            <person name="Basham D."/>
            <person name="Brooks K."/>
            <person name="Chillingworth T."/>
            <person name="Connerton P."/>
            <person name="Cronin A."/>
            <person name="Davis P."/>
            <person name="Davies R.M."/>
            <person name="Dowd L."/>
            <person name="White N."/>
            <person name="Farrar J."/>
            <person name="Feltwell T."/>
            <person name="Hamlin N."/>
            <person name="Haque A."/>
            <person name="Hien T.T."/>
            <person name="Holroyd S."/>
            <person name="Jagels K."/>
            <person name="Krogh A."/>
            <person name="Larsen T.S."/>
            <person name="Leather S."/>
            <person name="Moule S."/>
            <person name="O'Gaora P."/>
            <person name="Parry C."/>
            <person name="Quail M.A."/>
            <person name="Rutherford K.M."/>
            <person name="Simmonds M."/>
            <person name="Skelton J."/>
            <person name="Stevens K."/>
            <person name="Whitehead S."/>
            <person name="Barrell B.G."/>
        </authorList>
    </citation>
    <scope>NUCLEOTIDE SEQUENCE [LARGE SCALE GENOMIC DNA]</scope>
    <source>
        <strain>CT18</strain>
    </source>
</reference>
<reference key="2">
    <citation type="journal article" date="2003" name="J. Bacteriol.">
        <title>Comparative genomics of Salmonella enterica serovar Typhi strains Ty2 and CT18.</title>
        <authorList>
            <person name="Deng W."/>
            <person name="Liou S.-R."/>
            <person name="Plunkett G. III"/>
            <person name="Mayhew G.F."/>
            <person name="Rose D.J."/>
            <person name="Burland V."/>
            <person name="Kodoyianni V."/>
            <person name="Schwartz D.C."/>
            <person name="Blattner F.R."/>
        </authorList>
    </citation>
    <scope>NUCLEOTIDE SEQUENCE [LARGE SCALE GENOMIC DNA]</scope>
    <source>
        <strain>ATCC 700931 / Ty2</strain>
    </source>
</reference>
<reference key="3">
    <citation type="journal article" date="2015" name="Proc. Natl. Acad. Sci. U.S.A.">
        <title>Panoramic view of a superfamily of phosphatases through substrate profiling.</title>
        <authorList>
            <person name="Huang H."/>
            <person name="Pandya C."/>
            <person name="Liu C."/>
            <person name="Al-Obaidi N.F."/>
            <person name="Wang M."/>
            <person name="Zheng L."/>
            <person name="Toews Keating S."/>
            <person name="Aono M."/>
            <person name="Love J.D."/>
            <person name="Evans B."/>
            <person name="Seidel R.D."/>
            <person name="Hillerich B.S."/>
            <person name="Garforth S.J."/>
            <person name="Almo S.C."/>
            <person name="Mariano P.S."/>
            <person name="Dunaway-Mariano D."/>
            <person name="Allen K.N."/>
            <person name="Farelli J.D."/>
        </authorList>
    </citation>
    <scope>FUNCTION</scope>
    <scope>CATALYTIC ACTIVITY</scope>
    <scope>COFACTOR</scope>
</reference>
<evidence type="ECO:0000250" key="1">
    <source>
        <dbReference type="UniProtKB" id="A0A140N5J7"/>
    </source>
</evidence>
<evidence type="ECO:0000250" key="2">
    <source>
        <dbReference type="UniProtKB" id="P67653"/>
    </source>
</evidence>
<evidence type="ECO:0000269" key="3">
    <source>
    </source>
</evidence>
<evidence type="ECO:0000305" key="4"/>
<name>KDSC_SALTI</name>
<keyword id="KW-0378">Hydrolase</keyword>
<keyword id="KW-0448">Lipopolysaccharide biosynthesis</keyword>
<keyword id="KW-0460">Magnesium</keyword>
<keyword id="KW-0479">Metal-binding</keyword>
<organism>
    <name type="scientific">Salmonella typhi</name>
    <dbReference type="NCBI Taxonomy" id="90370"/>
    <lineage>
        <taxon>Bacteria</taxon>
        <taxon>Pseudomonadati</taxon>
        <taxon>Pseudomonadota</taxon>
        <taxon>Gammaproteobacteria</taxon>
        <taxon>Enterobacterales</taxon>
        <taxon>Enterobacteriaceae</taxon>
        <taxon>Salmonella</taxon>
    </lineage>
</organism>
<protein>
    <recommendedName>
        <fullName>3-deoxy-D-manno-octulosonate 8-phosphate phosphatase KdsC</fullName>
        <ecNumber evidence="3">3.1.3.45</ecNumber>
    </recommendedName>
    <alternativeName>
        <fullName>KDO 8-P phosphatase</fullName>
    </alternativeName>
</protein>
<feature type="chain" id="PRO_0000201699" description="3-deoxy-D-manno-octulosonate 8-phosphate phosphatase KdsC">
    <location>
        <begin position="1"/>
        <end position="188"/>
    </location>
</feature>
<feature type="binding site" evidence="2">
    <location>
        <position position="32"/>
    </location>
    <ligand>
        <name>Mg(2+)</name>
        <dbReference type="ChEBI" id="CHEBI:18420"/>
    </ligand>
</feature>
<feature type="binding site" evidence="2">
    <location>
        <position position="34"/>
    </location>
    <ligand>
        <name>Mg(2+)</name>
        <dbReference type="ChEBI" id="CHEBI:18420"/>
    </ligand>
</feature>
<feature type="binding site" evidence="2">
    <location>
        <position position="34"/>
    </location>
    <ligand>
        <name>substrate</name>
    </ligand>
</feature>
<feature type="binding site" evidence="2">
    <location>
        <begin position="55"/>
        <end position="59"/>
    </location>
    <ligand>
        <name>substrate</name>
    </ligand>
</feature>
<feature type="binding site" evidence="2">
    <location>
        <position position="63"/>
    </location>
    <ligand>
        <name>substrate</name>
    </ligand>
</feature>
<feature type="binding site" evidence="2">
    <location>
        <position position="78"/>
    </location>
    <ligand>
        <name>substrate</name>
    </ligand>
</feature>
<feature type="binding site" evidence="2">
    <location>
        <position position="86"/>
    </location>
    <ligand>
        <name>substrate</name>
    </ligand>
</feature>
<feature type="binding site" evidence="2">
    <location>
        <position position="102"/>
    </location>
    <ligand>
        <name>substrate</name>
    </ligand>
</feature>
<feature type="binding site" evidence="2">
    <location>
        <position position="125"/>
    </location>
    <ligand>
        <name>Mg(2+)</name>
        <dbReference type="ChEBI" id="CHEBI:18420"/>
    </ligand>
</feature>
<gene>
    <name type="primary">kdsC</name>
    <name type="ordered locus">STY3495</name>
    <name type="ordered locus">t3233</name>
</gene>
<proteinExistence type="evidence at protein level"/>
<comment type="function">
    <text evidence="3">Catalyzes the hydrolysis of 3-deoxy-D-manno-octulosonate 8-phosphate (KDO 8-P) to 3-deoxy-D-manno-octulosonate (KDO) and inorganic phosphate in vitro. Also catalyzes the dephosphorylation of phospho-tyrosine in vitro.</text>
</comment>
<comment type="catalytic activity">
    <reaction evidence="3">
        <text>3-deoxy-alpha-D-manno-2-octulosonate-8-phosphate + H2O = 3-deoxy-alpha-D-manno-oct-2-ulosonate + phosphate</text>
        <dbReference type="Rhea" id="RHEA:11500"/>
        <dbReference type="ChEBI" id="CHEBI:15377"/>
        <dbReference type="ChEBI" id="CHEBI:43474"/>
        <dbReference type="ChEBI" id="CHEBI:85985"/>
        <dbReference type="ChEBI" id="CHEBI:85986"/>
        <dbReference type="EC" id="3.1.3.45"/>
    </reaction>
</comment>
<comment type="cofactor">
    <cofactor evidence="3">
        <name>Mg(2+)</name>
        <dbReference type="ChEBI" id="CHEBI:18420"/>
    </cofactor>
</comment>
<comment type="pathway">
    <text evidence="1">Carbohydrate biosynthesis; 3-deoxy-D-manno-octulosonate biosynthesis; 3-deoxy-D-manno-octulosonate from D-ribulose 5-phosphate: step 3/3.</text>
</comment>
<comment type="pathway">
    <text evidence="1">Bacterial outer membrane biogenesis; lipopolysaccharide biosynthesis.</text>
</comment>
<comment type="subunit">
    <text evidence="1">Homotetramer.</text>
</comment>
<comment type="similarity">
    <text evidence="4">Belongs to the KdsC family.</text>
</comment>
<dbReference type="EC" id="3.1.3.45" evidence="3"/>
<dbReference type="EMBL" id="AL513382">
    <property type="protein sequence ID" value="CAD07833.1"/>
    <property type="molecule type" value="Genomic_DNA"/>
</dbReference>
<dbReference type="EMBL" id="AE014613">
    <property type="protein sequence ID" value="AAO70769.1"/>
    <property type="molecule type" value="Genomic_DNA"/>
</dbReference>
<dbReference type="RefSeq" id="NP_457695.1">
    <property type="nucleotide sequence ID" value="NC_003198.1"/>
</dbReference>
<dbReference type="RefSeq" id="WP_000030029.1">
    <property type="nucleotide sequence ID" value="NZ_WSUR01000003.1"/>
</dbReference>
<dbReference type="SMR" id="Q8Z3G5"/>
<dbReference type="STRING" id="220341.gene:17587346"/>
<dbReference type="KEGG" id="stt:t3233"/>
<dbReference type="KEGG" id="sty:STY3495"/>
<dbReference type="PATRIC" id="fig|220341.7.peg.3559"/>
<dbReference type="eggNOG" id="COG1778">
    <property type="taxonomic scope" value="Bacteria"/>
</dbReference>
<dbReference type="HOGENOM" id="CLU_106694_0_1_6"/>
<dbReference type="OMA" id="GMTLWQK"/>
<dbReference type="OrthoDB" id="9805604at2"/>
<dbReference type="UniPathway" id="UPA00030"/>
<dbReference type="UniPathway" id="UPA00357">
    <property type="reaction ID" value="UER00475"/>
</dbReference>
<dbReference type="Proteomes" id="UP000000541">
    <property type="component" value="Chromosome"/>
</dbReference>
<dbReference type="Proteomes" id="UP000002670">
    <property type="component" value="Chromosome"/>
</dbReference>
<dbReference type="GO" id="GO:0019143">
    <property type="term" value="F:3-deoxy-manno-octulosonate-8-phosphatase activity"/>
    <property type="evidence" value="ECO:0007669"/>
    <property type="project" value="UniProtKB-EC"/>
</dbReference>
<dbReference type="GO" id="GO:0046872">
    <property type="term" value="F:metal ion binding"/>
    <property type="evidence" value="ECO:0007669"/>
    <property type="project" value="UniProtKB-KW"/>
</dbReference>
<dbReference type="GO" id="GO:0008781">
    <property type="term" value="F:N-acylneuraminate cytidylyltransferase activity"/>
    <property type="evidence" value="ECO:0007669"/>
    <property type="project" value="TreeGrafter"/>
</dbReference>
<dbReference type="GO" id="GO:0009103">
    <property type="term" value="P:lipopolysaccharide biosynthetic process"/>
    <property type="evidence" value="ECO:0007669"/>
    <property type="project" value="UniProtKB-UniPathway"/>
</dbReference>
<dbReference type="CDD" id="cd01630">
    <property type="entry name" value="HAD_KDO-like"/>
    <property type="match status" value="1"/>
</dbReference>
<dbReference type="FunFam" id="3.40.50.1000:FF:000029">
    <property type="entry name" value="3-deoxy-D-manno-octulosonate 8-phosphate phosphatase KdsC"/>
    <property type="match status" value="1"/>
</dbReference>
<dbReference type="Gene3D" id="3.40.50.1000">
    <property type="entry name" value="HAD superfamily/HAD-like"/>
    <property type="match status" value="1"/>
</dbReference>
<dbReference type="InterPro" id="IPR050793">
    <property type="entry name" value="CMP-NeuNAc_synthase"/>
</dbReference>
<dbReference type="InterPro" id="IPR036412">
    <property type="entry name" value="HAD-like_sf"/>
</dbReference>
<dbReference type="InterPro" id="IPR023214">
    <property type="entry name" value="HAD_sf"/>
</dbReference>
<dbReference type="InterPro" id="IPR010023">
    <property type="entry name" value="KdsC_fam"/>
</dbReference>
<dbReference type="NCBIfam" id="TIGR01670">
    <property type="entry name" value="KdsC-phosphatas"/>
    <property type="match status" value="1"/>
</dbReference>
<dbReference type="NCBIfam" id="NF007019">
    <property type="entry name" value="PRK09484.1"/>
    <property type="match status" value="1"/>
</dbReference>
<dbReference type="PANTHER" id="PTHR21485">
    <property type="entry name" value="HAD SUPERFAMILY MEMBERS CMAS AND KDSC"/>
    <property type="match status" value="1"/>
</dbReference>
<dbReference type="PANTHER" id="PTHR21485:SF6">
    <property type="entry name" value="N-ACYLNEURAMINATE CYTIDYLYLTRANSFERASE-RELATED"/>
    <property type="match status" value="1"/>
</dbReference>
<dbReference type="Pfam" id="PF08282">
    <property type="entry name" value="Hydrolase_3"/>
    <property type="match status" value="1"/>
</dbReference>
<dbReference type="PIRSF" id="PIRSF006118">
    <property type="entry name" value="KDO8-P_Ptase"/>
    <property type="match status" value="1"/>
</dbReference>
<dbReference type="SFLD" id="SFLDG01138">
    <property type="entry name" value="C1.6.2:_Deoxy-d-mannose-octulo"/>
    <property type="match status" value="1"/>
</dbReference>
<dbReference type="SFLD" id="SFLDG01136">
    <property type="entry name" value="C1.6:_Phosphoserine_Phosphatas"/>
    <property type="match status" value="1"/>
</dbReference>
<dbReference type="SUPFAM" id="SSF56784">
    <property type="entry name" value="HAD-like"/>
    <property type="match status" value="1"/>
</dbReference>
<sequence>MSKAGASLATCYGPVSTHVMTKAENIRLLILDVDGVLSDGLIYMGNNGEELKAFNVRDGYGIRCALTSNIEVAIITGRKAKLVEDRCATLGIVHLYQGQSNKLIAFSDLLEKLAIAPENVAYVGDDLIDWPVMEKVGLSVAVADAHPLLIPRADYVTHIAGGRGAVREVCDLLLLAQGKLDEAKGQSI</sequence>
<accession>Q8Z3G5</accession>